<organism>
    <name type="scientific">Cronobacter sakazakii (strain ATCC BAA-894)</name>
    <name type="common">Enterobacter sakazakii</name>
    <dbReference type="NCBI Taxonomy" id="290339"/>
    <lineage>
        <taxon>Bacteria</taxon>
        <taxon>Pseudomonadati</taxon>
        <taxon>Pseudomonadota</taxon>
        <taxon>Gammaproteobacteria</taxon>
        <taxon>Enterobacterales</taxon>
        <taxon>Enterobacteriaceae</taxon>
        <taxon>Cronobacter</taxon>
    </lineage>
</organism>
<accession>A7MJ64</accession>
<evidence type="ECO:0000255" key="1">
    <source>
        <dbReference type="HAMAP-Rule" id="MF_01540"/>
    </source>
</evidence>
<reference key="1">
    <citation type="journal article" date="2010" name="PLoS ONE">
        <title>Genome sequence of Cronobacter sakazakii BAA-894 and comparative genomic hybridization analysis with other Cronobacter species.</title>
        <authorList>
            <person name="Kucerova E."/>
            <person name="Clifton S.W."/>
            <person name="Xia X.Q."/>
            <person name="Long F."/>
            <person name="Porwollik S."/>
            <person name="Fulton L."/>
            <person name="Fronick C."/>
            <person name="Minx P."/>
            <person name="Kyung K."/>
            <person name="Warren W."/>
            <person name="Fulton R."/>
            <person name="Feng D."/>
            <person name="Wollam A."/>
            <person name="Shah N."/>
            <person name="Bhonagiri V."/>
            <person name="Nash W.E."/>
            <person name="Hallsworth-Pepin K."/>
            <person name="Wilson R.K."/>
            <person name="McClelland M."/>
            <person name="Forsythe S.J."/>
        </authorList>
    </citation>
    <scope>NUCLEOTIDE SEQUENCE [LARGE SCALE GENOMIC DNA]</scope>
    <source>
        <strain>ATCC BAA-894</strain>
    </source>
</reference>
<keyword id="KW-0004">4Fe-4S</keyword>
<keyword id="KW-0028">Amino-acid biosynthesis</keyword>
<keyword id="KW-0198">Cysteine biosynthesis</keyword>
<keyword id="KW-0349">Heme</keyword>
<keyword id="KW-0408">Iron</keyword>
<keyword id="KW-0411">Iron-sulfur</keyword>
<keyword id="KW-0479">Metal-binding</keyword>
<keyword id="KW-0521">NADP</keyword>
<keyword id="KW-0560">Oxidoreductase</keyword>
<keyword id="KW-1185">Reference proteome</keyword>
<protein>
    <recommendedName>
        <fullName evidence="1">Sulfite reductase [NADPH] hemoprotein beta-component</fullName>
        <shortName evidence="1">SiR-HP</shortName>
        <shortName evidence="1">SiRHP</shortName>
        <ecNumber evidence="1">1.8.1.2</ecNumber>
    </recommendedName>
</protein>
<comment type="function">
    <text evidence="1">Component of the sulfite reductase complex that catalyzes the 6-electron reduction of sulfite to sulfide. This is one of several activities required for the biosynthesis of L-cysteine from sulfate.</text>
</comment>
<comment type="catalytic activity">
    <reaction evidence="1">
        <text>hydrogen sulfide + 3 NADP(+) + 3 H2O = sulfite + 3 NADPH + 4 H(+)</text>
        <dbReference type="Rhea" id="RHEA:13801"/>
        <dbReference type="ChEBI" id="CHEBI:15377"/>
        <dbReference type="ChEBI" id="CHEBI:15378"/>
        <dbReference type="ChEBI" id="CHEBI:17359"/>
        <dbReference type="ChEBI" id="CHEBI:29919"/>
        <dbReference type="ChEBI" id="CHEBI:57783"/>
        <dbReference type="ChEBI" id="CHEBI:58349"/>
        <dbReference type="EC" id="1.8.1.2"/>
    </reaction>
</comment>
<comment type="cofactor">
    <cofactor evidence="1">
        <name>siroheme</name>
        <dbReference type="ChEBI" id="CHEBI:60052"/>
    </cofactor>
    <text evidence="1">Binds 1 siroheme per subunit.</text>
</comment>
<comment type="cofactor">
    <cofactor evidence="1">
        <name>[4Fe-4S] cluster</name>
        <dbReference type="ChEBI" id="CHEBI:49883"/>
    </cofactor>
    <text evidence="1">Binds 1 [4Fe-4S] cluster per subunit.</text>
</comment>
<comment type="pathway">
    <text evidence="1">Sulfur metabolism; hydrogen sulfide biosynthesis; hydrogen sulfide from sulfite (NADPH route): step 1/1.</text>
</comment>
<comment type="subunit">
    <text evidence="1">Alpha(8)-beta(8). The alpha component is a flavoprotein, the beta component is a hemoprotein.</text>
</comment>
<comment type="similarity">
    <text evidence="1">Belongs to the nitrite and sulfite reductase 4Fe-4S domain family.</text>
</comment>
<sequence>MSEKYPGPLVVEGKLSDAERMKRESNFLRGTIAEDLHDGLTGGFNGDNFLLIRFHGMYQQDDRDIRAERAAQKLEPRHAMMLRCRLPGGIMTPQQWLAIDKFAEENTIYGSIRLTNRQTFQYHGLLKKNVKPAHQMLHSVGLDALATANDMNRNVLCTSNPVESQLHAEAYEWAKKLSEHLLPRTRAYAEIWLDQEKVATTDEEPILGATYLPRKFKTTVVVPPQNDVDLHANDMNFVAIAENGKLVGFNLLVGGGLSIEHGNKKTYARTATEFGYIPLEHTLAVAEAVVTTQRDWGNRTDRKNAKTKYTLERVGPDVFKAEVERRAGVTFEPVRPYEFTGRGDRIGWVKGIDDKWHLTLFIENGRILDFPDKPLKTGLKEIARIHKGDFRLTANQNLIVAGVPEGDKAKIEQIARAHGLMAGVTPQRENSMACVSFPTCPLAMAEAERFLPQFIDKVDGIMAKHGLAEEHIVLRVTGCPNGCGRAMLAELGLVGKAPGRYNLHLGGNRIGTRIPRMYRENITESEILDNIDELVGRWAQEREPGEGFGDFTVRAGIIRPVLDPARDFWE</sequence>
<name>CYSI_CROS8</name>
<proteinExistence type="inferred from homology"/>
<gene>
    <name evidence="1" type="primary">cysI</name>
    <name type="ordered locus">ESA_00535</name>
</gene>
<dbReference type="EC" id="1.8.1.2" evidence="1"/>
<dbReference type="EMBL" id="CP000783">
    <property type="protein sequence ID" value="ABU75826.1"/>
    <property type="molecule type" value="Genomic_DNA"/>
</dbReference>
<dbReference type="RefSeq" id="WP_012123928.1">
    <property type="nucleotide sequence ID" value="NC_009778.1"/>
</dbReference>
<dbReference type="SMR" id="A7MJ64"/>
<dbReference type="KEGG" id="esa:ESA_00535"/>
<dbReference type="PATRIC" id="fig|290339.8.peg.479"/>
<dbReference type="HOGENOM" id="CLU_001975_3_2_6"/>
<dbReference type="UniPathway" id="UPA00140">
    <property type="reaction ID" value="UER00207"/>
</dbReference>
<dbReference type="Proteomes" id="UP000000260">
    <property type="component" value="Chromosome"/>
</dbReference>
<dbReference type="GO" id="GO:0009337">
    <property type="term" value="C:sulfite reductase complex (NADPH)"/>
    <property type="evidence" value="ECO:0007669"/>
    <property type="project" value="InterPro"/>
</dbReference>
<dbReference type="GO" id="GO:0051539">
    <property type="term" value="F:4 iron, 4 sulfur cluster binding"/>
    <property type="evidence" value="ECO:0007669"/>
    <property type="project" value="UniProtKB-KW"/>
</dbReference>
<dbReference type="GO" id="GO:0020037">
    <property type="term" value="F:heme binding"/>
    <property type="evidence" value="ECO:0007669"/>
    <property type="project" value="InterPro"/>
</dbReference>
<dbReference type="GO" id="GO:0046872">
    <property type="term" value="F:metal ion binding"/>
    <property type="evidence" value="ECO:0007669"/>
    <property type="project" value="UniProtKB-KW"/>
</dbReference>
<dbReference type="GO" id="GO:0050661">
    <property type="term" value="F:NADP binding"/>
    <property type="evidence" value="ECO:0007669"/>
    <property type="project" value="InterPro"/>
</dbReference>
<dbReference type="GO" id="GO:0050311">
    <property type="term" value="F:sulfite reductase (ferredoxin) activity"/>
    <property type="evidence" value="ECO:0007669"/>
    <property type="project" value="TreeGrafter"/>
</dbReference>
<dbReference type="GO" id="GO:0004783">
    <property type="term" value="F:sulfite reductase (NADPH) activity"/>
    <property type="evidence" value="ECO:0007669"/>
    <property type="project" value="UniProtKB-UniRule"/>
</dbReference>
<dbReference type="GO" id="GO:0019344">
    <property type="term" value="P:cysteine biosynthetic process"/>
    <property type="evidence" value="ECO:0007669"/>
    <property type="project" value="UniProtKB-KW"/>
</dbReference>
<dbReference type="GO" id="GO:0070814">
    <property type="term" value="P:hydrogen sulfide biosynthetic process"/>
    <property type="evidence" value="ECO:0007669"/>
    <property type="project" value="UniProtKB-UniRule"/>
</dbReference>
<dbReference type="GO" id="GO:0000103">
    <property type="term" value="P:sulfate assimilation"/>
    <property type="evidence" value="ECO:0007669"/>
    <property type="project" value="UniProtKB-UniRule"/>
</dbReference>
<dbReference type="FunFam" id="3.30.413.10:FF:000003">
    <property type="entry name" value="Sulfite reductase [NADPH] hemoprotein beta-component"/>
    <property type="match status" value="1"/>
</dbReference>
<dbReference type="FunFam" id="3.30.413.10:FF:000004">
    <property type="entry name" value="Sulfite reductase [NADPH] hemoprotein beta-component"/>
    <property type="match status" value="1"/>
</dbReference>
<dbReference type="Gene3D" id="3.30.413.10">
    <property type="entry name" value="Sulfite Reductase Hemoprotein, domain 1"/>
    <property type="match status" value="2"/>
</dbReference>
<dbReference type="HAMAP" id="MF_01540">
    <property type="entry name" value="CysI"/>
    <property type="match status" value="1"/>
</dbReference>
<dbReference type="InterPro" id="IPR011786">
    <property type="entry name" value="CysI"/>
</dbReference>
<dbReference type="InterPro" id="IPR005117">
    <property type="entry name" value="NiRdtase/SiRdtase_haem-b_fer"/>
</dbReference>
<dbReference type="InterPro" id="IPR036136">
    <property type="entry name" value="Nit/Sulf_reduc_fer-like_dom_sf"/>
</dbReference>
<dbReference type="InterPro" id="IPR006067">
    <property type="entry name" value="NO2/SO3_Rdtase_4Fe4S_dom"/>
</dbReference>
<dbReference type="InterPro" id="IPR045169">
    <property type="entry name" value="NO2/SO3_Rdtase_4Fe4S_prot"/>
</dbReference>
<dbReference type="InterPro" id="IPR045854">
    <property type="entry name" value="NO2/SO3_Rdtase_4Fe4S_sf"/>
</dbReference>
<dbReference type="InterPro" id="IPR006066">
    <property type="entry name" value="NO2/SO3_Rdtase_FeS/sirohaem_BS"/>
</dbReference>
<dbReference type="NCBIfam" id="TIGR02041">
    <property type="entry name" value="CysI"/>
    <property type="match status" value="1"/>
</dbReference>
<dbReference type="NCBIfam" id="NF010029">
    <property type="entry name" value="PRK13504.1"/>
    <property type="match status" value="1"/>
</dbReference>
<dbReference type="PANTHER" id="PTHR11493:SF47">
    <property type="entry name" value="SULFITE REDUCTASE [NADPH] SUBUNIT BETA"/>
    <property type="match status" value="1"/>
</dbReference>
<dbReference type="PANTHER" id="PTHR11493">
    <property type="entry name" value="SULFITE REDUCTASE [NADPH] SUBUNIT BETA-RELATED"/>
    <property type="match status" value="1"/>
</dbReference>
<dbReference type="Pfam" id="PF01077">
    <property type="entry name" value="NIR_SIR"/>
    <property type="match status" value="1"/>
</dbReference>
<dbReference type="Pfam" id="PF03460">
    <property type="entry name" value="NIR_SIR_ferr"/>
    <property type="match status" value="2"/>
</dbReference>
<dbReference type="PRINTS" id="PR00397">
    <property type="entry name" value="SIROHAEM"/>
</dbReference>
<dbReference type="SUPFAM" id="SSF56014">
    <property type="entry name" value="Nitrite and sulphite reductase 4Fe-4S domain-like"/>
    <property type="match status" value="2"/>
</dbReference>
<dbReference type="SUPFAM" id="SSF55124">
    <property type="entry name" value="Nitrite/Sulfite reductase N-terminal domain-like"/>
    <property type="match status" value="2"/>
</dbReference>
<dbReference type="PROSITE" id="PS00365">
    <property type="entry name" value="NIR_SIR"/>
    <property type="match status" value="1"/>
</dbReference>
<feature type="chain" id="PRO_1000068764" description="Sulfite reductase [NADPH] hemoprotein beta-component">
    <location>
        <begin position="1"/>
        <end position="570"/>
    </location>
</feature>
<feature type="binding site" evidence="1">
    <location>
        <position position="434"/>
    </location>
    <ligand>
        <name>[4Fe-4S] cluster</name>
        <dbReference type="ChEBI" id="CHEBI:49883"/>
    </ligand>
</feature>
<feature type="binding site" evidence="1">
    <location>
        <position position="440"/>
    </location>
    <ligand>
        <name>[4Fe-4S] cluster</name>
        <dbReference type="ChEBI" id="CHEBI:49883"/>
    </ligand>
</feature>
<feature type="binding site" evidence="1">
    <location>
        <position position="479"/>
    </location>
    <ligand>
        <name>[4Fe-4S] cluster</name>
        <dbReference type="ChEBI" id="CHEBI:49883"/>
    </ligand>
</feature>
<feature type="binding site" evidence="1">
    <location>
        <position position="483"/>
    </location>
    <ligand>
        <name>[4Fe-4S] cluster</name>
        <dbReference type="ChEBI" id="CHEBI:49883"/>
    </ligand>
</feature>
<feature type="binding site" description="axial binding residue" evidence="1">
    <location>
        <position position="483"/>
    </location>
    <ligand>
        <name>siroheme</name>
        <dbReference type="ChEBI" id="CHEBI:60052"/>
    </ligand>
    <ligandPart>
        <name>Fe</name>
        <dbReference type="ChEBI" id="CHEBI:18248"/>
    </ligandPart>
</feature>